<sequence>MMFQQDYPHGFSLVETSLSYEMLDYFQNIVVSNSEDVASQQNSISSSSYSSATLSCSITEQKSHLTEKLSPLRERYGCGDFLSRKRRRRSEKTIVDKENQRMNHIAVERNRRKQMNHFLSILKSMMPLSYSQPNDQASIIEGTISYLKKLEQRLQSLEAQLKATKLNQSPNIFSDFFMFPQYSTATATATATASSSSSSHHHHKRLEVVADVEVTMVERHANIKVLTKTQPRLLFKIINEFNSLGLSTLHLNLTTSKDMSLFTFSVKVEADCQLTPSGNEVANTVHEVVRRVHKER</sequence>
<gene>
    <name type="primary">BHLH99</name>
    <name type="synonym">EN18</name>
    <name type="ordered locus">At5g65320</name>
    <name type="ORF">MNA5.5</name>
</gene>
<comment type="subunit">
    <text evidence="3">Homodimer.</text>
</comment>
<comment type="subcellular location">
    <subcellularLocation>
        <location evidence="1">Nucleus</location>
    </subcellularLocation>
</comment>
<comment type="tissue specificity">
    <text evidence="2">Expressed constitutively in roots, stems, and flowers.</text>
</comment>
<comment type="induction">
    <text evidence="2">Repressed by heat treatment.</text>
</comment>
<dbReference type="EMBL" id="AB011479">
    <property type="protein sequence ID" value="BAB11554.1"/>
    <property type="molecule type" value="Genomic_DNA"/>
</dbReference>
<dbReference type="EMBL" id="CP002688">
    <property type="protein sequence ID" value="AED98039.1"/>
    <property type="molecule type" value="Genomic_DNA"/>
</dbReference>
<dbReference type="EMBL" id="AY070095">
    <property type="protein sequence ID" value="AAL49832.1"/>
    <property type="molecule type" value="mRNA"/>
</dbReference>
<dbReference type="EMBL" id="AY096704">
    <property type="protein sequence ID" value="AAM20338.1"/>
    <property type="molecule type" value="mRNA"/>
</dbReference>
<dbReference type="EMBL" id="AF488625">
    <property type="status" value="NOT_ANNOTATED_CDS"/>
    <property type="molecule type" value="mRNA"/>
</dbReference>
<dbReference type="RefSeq" id="NP_201335.1">
    <property type="nucleotide sequence ID" value="NM_125930.2"/>
</dbReference>
<dbReference type="SMR" id="Q9FKQ6"/>
<dbReference type="BioGRID" id="21899">
    <property type="interactions" value="4"/>
</dbReference>
<dbReference type="FunCoup" id="Q9FKQ6">
    <property type="interactions" value="13"/>
</dbReference>
<dbReference type="IntAct" id="Q9FKQ6">
    <property type="interactions" value="4"/>
</dbReference>
<dbReference type="STRING" id="3702.Q9FKQ6"/>
<dbReference type="PaxDb" id="3702-AT5G65320.1"/>
<dbReference type="EnsemblPlants" id="AT5G65320.1">
    <property type="protein sequence ID" value="AT5G65320.1"/>
    <property type="gene ID" value="AT5G65320"/>
</dbReference>
<dbReference type="GeneID" id="836657"/>
<dbReference type="Gramene" id="AT5G65320.1">
    <property type="protein sequence ID" value="AT5G65320.1"/>
    <property type="gene ID" value="AT5G65320"/>
</dbReference>
<dbReference type="KEGG" id="ath:AT5G65320"/>
<dbReference type="Araport" id="AT5G65320"/>
<dbReference type="TAIR" id="AT5G65320"/>
<dbReference type="eggNOG" id="ENOG502QSWD">
    <property type="taxonomic scope" value="Eukaryota"/>
</dbReference>
<dbReference type="HOGENOM" id="CLU_044652_5_0_1"/>
<dbReference type="InParanoid" id="Q9FKQ6"/>
<dbReference type="OMA" id="FQHEYPY"/>
<dbReference type="PhylomeDB" id="Q9FKQ6"/>
<dbReference type="PRO" id="PR:Q9FKQ6"/>
<dbReference type="Proteomes" id="UP000006548">
    <property type="component" value="Chromosome 5"/>
</dbReference>
<dbReference type="ExpressionAtlas" id="Q9FKQ6">
    <property type="expression patterns" value="baseline and differential"/>
</dbReference>
<dbReference type="GO" id="GO:0005634">
    <property type="term" value="C:nucleus"/>
    <property type="evidence" value="ECO:0007669"/>
    <property type="project" value="UniProtKB-SubCell"/>
</dbReference>
<dbReference type="GO" id="GO:0003677">
    <property type="term" value="F:DNA binding"/>
    <property type="evidence" value="ECO:0007669"/>
    <property type="project" value="UniProtKB-KW"/>
</dbReference>
<dbReference type="GO" id="GO:0003700">
    <property type="term" value="F:DNA-binding transcription factor activity"/>
    <property type="evidence" value="ECO:0000250"/>
    <property type="project" value="TAIR"/>
</dbReference>
<dbReference type="GO" id="GO:0046983">
    <property type="term" value="F:protein dimerization activity"/>
    <property type="evidence" value="ECO:0007669"/>
    <property type="project" value="InterPro"/>
</dbReference>
<dbReference type="GO" id="GO:0006355">
    <property type="term" value="P:regulation of DNA-templated transcription"/>
    <property type="evidence" value="ECO:0000304"/>
    <property type="project" value="TAIR"/>
</dbReference>
<dbReference type="CDD" id="cd11448">
    <property type="entry name" value="bHLH_AtFAMA_like"/>
    <property type="match status" value="1"/>
</dbReference>
<dbReference type="Gene3D" id="4.10.280.10">
    <property type="entry name" value="Helix-loop-helix DNA-binding domain"/>
    <property type="match status" value="1"/>
</dbReference>
<dbReference type="InterPro" id="IPR054502">
    <property type="entry name" value="bHLH-TF_ACT-like_plant"/>
</dbReference>
<dbReference type="InterPro" id="IPR011598">
    <property type="entry name" value="bHLH_dom"/>
</dbReference>
<dbReference type="InterPro" id="IPR036638">
    <property type="entry name" value="HLH_DNA-bd_sf"/>
</dbReference>
<dbReference type="PANTHER" id="PTHR11969">
    <property type="entry name" value="MAX DIMERIZATION, MAD"/>
    <property type="match status" value="1"/>
</dbReference>
<dbReference type="PANTHER" id="PTHR11969:SF89">
    <property type="entry name" value="TRANSCRIPTION FACTOR BHLH99"/>
    <property type="match status" value="1"/>
</dbReference>
<dbReference type="Pfam" id="PF22754">
    <property type="entry name" value="bHLH-TF_ACT-like_plant"/>
    <property type="match status" value="1"/>
</dbReference>
<dbReference type="Pfam" id="PF00010">
    <property type="entry name" value="HLH"/>
    <property type="match status" value="1"/>
</dbReference>
<dbReference type="SMART" id="SM00353">
    <property type="entry name" value="HLH"/>
    <property type="match status" value="1"/>
</dbReference>
<dbReference type="SUPFAM" id="SSF47459">
    <property type="entry name" value="HLH, helix-loop-helix DNA-binding domain"/>
    <property type="match status" value="1"/>
</dbReference>
<dbReference type="PROSITE" id="PS50888">
    <property type="entry name" value="BHLH"/>
    <property type="match status" value="1"/>
</dbReference>
<protein>
    <recommendedName>
        <fullName>Transcription factor bHLH99</fullName>
    </recommendedName>
    <alternativeName>
        <fullName>Basic helix-loop-helix protein 99</fullName>
        <shortName>AtbHLH99</shortName>
        <shortName>bHLH 99</shortName>
    </alternativeName>
    <alternativeName>
        <fullName>Transcription factor EN 18</fullName>
    </alternativeName>
    <alternativeName>
        <fullName>bHLH transcription factor bHLH099</fullName>
    </alternativeName>
</protein>
<reference key="1">
    <citation type="journal article" date="1998" name="DNA Res.">
        <title>Structural analysis of Arabidopsis thaliana chromosome 5. V. Sequence features of the regions of 1,381,565 bp covered by twenty one physically assigned P1 and TAC clones.</title>
        <authorList>
            <person name="Kaneko T."/>
            <person name="Kotani H."/>
            <person name="Nakamura Y."/>
            <person name="Sato S."/>
            <person name="Asamizu E."/>
            <person name="Miyajima N."/>
            <person name="Tabata S."/>
        </authorList>
    </citation>
    <scope>NUCLEOTIDE SEQUENCE [LARGE SCALE GENOMIC DNA]</scope>
    <source>
        <strain>cv. Columbia</strain>
    </source>
</reference>
<reference key="2">
    <citation type="journal article" date="2017" name="Plant J.">
        <title>Araport11: a complete reannotation of the Arabidopsis thaliana reference genome.</title>
        <authorList>
            <person name="Cheng C.Y."/>
            <person name="Krishnakumar V."/>
            <person name="Chan A.P."/>
            <person name="Thibaud-Nissen F."/>
            <person name="Schobel S."/>
            <person name="Town C.D."/>
        </authorList>
    </citation>
    <scope>GENOME REANNOTATION</scope>
    <source>
        <strain>cv. Columbia</strain>
    </source>
</reference>
<reference key="3">
    <citation type="journal article" date="2003" name="Science">
        <title>Empirical analysis of transcriptional activity in the Arabidopsis genome.</title>
        <authorList>
            <person name="Yamada K."/>
            <person name="Lim J."/>
            <person name="Dale J.M."/>
            <person name="Chen H."/>
            <person name="Shinn P."/>
            <person name="Palm C.J."/>
            <person name="Southwick A.M."/>
            <person name="Wu H.C."/>
            <person name="Kim C.J."/>
            <person name="Nguyen M."/>
            <person name="Pham P.K."/>
            <person name="Cheuk R.F."/>
            <person name="Karlin-Newmann G."/>
            <person name="Liu S.X."/>
            <person name="Lam B."/>
            <person name="Sakano H."/>
            <person name="Wu T."/>
            <person name="Yu G."/>
            <person name="Miranda M."/>
            <person name="Quach H.L."/>
            <person name="Tripp M."/>
            <person name="Chang C.H."/>
            <person name="Lee J.M."/>
            <person name="Toriumi M.J."/>
            <person name="Chan M.M."/>
            <person name="Tang C.C."/>
            <person name="Onodera C.S."/>
            <person name="Deng J.M."/>
            <person name="Akiyama K."/>
            <person name="Ansari Y."/>
            <person name="Arakawa T."/>
            <person name="Banh J."/>
            <person name="Banno F."/>
            <person name="Bowser L."/>
            <person name="Brooks S.Y."/>
            <person name="Carninci P."/>
            <person name="Chao Q."/>
            <person name="Choy N."/>
            <person name="Enju A."/>
            <person name="Goldsmith A.D."/>
            <person name="Gurjal M."/>
            <person name="Hansen N.F."/>
            <person name="Hayashizaki Y."/>
            <person name="Johnson-Hopson C."/>
            <person name="Hsuan V.W."/>
            <person name="Iida K."/>
            <person name="Karnes M."/>
            <person name="Khan S."/>
            <person name="Koesema E."/>
            <person name="Ishida J."/>
            <person name="Jiang P.X."/>
            <person name="Jones T."/>
            <person name="Kawai J."/>
            <person name="Kamiya A."/>
            <person name="Meyers C."/>
            <person name="Nakajima M."/>
            <person name="Narusaka M."/>
            <person name="Seki M."/>
            <person name="Sakurai T."/>
            <person name="Satou M."/>
            <person name="Tamse R."/>
            <person name="Vaysberg M."/>
            <person name="Wallender E.K."/>
            <person name="Wong C."/>
            <person name="Yamamura Y."/>
            <person name="Yuan S."/>
            <person name="Shinozaki K."/>
            <person name="Davis R.W."/>
            <person name="Theologis A."/>
            <person name="Ecker J.R."/>
        </authorList>
    </citation>
    <scope>NUCLEOTIDE SEQUENCE [LARGE SCALE MRNA]</scope>
    <source>
        <strain>cv. Columbia</strain>
    </source>
</reference>
<reference key="4">
    <citation type="journal article" date="2003" name="Mol. Biol. Evol.">
        <title>The basic helix-loop-helix transcription factor family in plants: a genome-wide study of protein structure and functional diversity.</title>
        <authorList>
            <person name="Heim M.A."/>
            <person name="Jakoby M."/>
            <person name="Werber M."/>
            <person name="Martin C."/>
            <person name="Weisshaar B."/>
            <person name="Bailey P.C."/>
        </authorList>
    </citation>
    <scope>NUCLEOTIDE SEQUENCE [MRNA] OF 15-296</scope>
    <scope>TISSUE SPECIFICITY</scope>
    <scope>INDUCTION</scope>
    <scope>GENE FAMILY</scope>
    <scope>NOMENCLATURE</scope>
    <source>
        <strain>cv. Columbia</strain>
    </source>
</reference>
<reference key="5">
    <citation type="journal article" date="2003" name="Plant Cell">
        <title>The Arabidopsis basic/helix-loop-helix transcription factor family.</title>
        <authorList>
            <person name="Toledo-Ortiz G."/>
            <person name="Huq E."/>
            <person name="Quail P.H."/>
        </authorList>
    </citation>
    <scope>GENE FAMILY</scope>
</reference>
<reference key="6">
    <citation type="journal article" date="2003" name="Plant Cell">
        <title>Update on the basic helix-loop-helix transcription factor gene family in Arabidopsis thaliana.</title>
        <authorList>
            <person name="Bailey P.C."/>
            <person name="Martin C."/>
            <person name="Toledo-Ortiz G."/>
            <person name="Quail P.H."/>
            <person name="Huq E."/>
            <person name="Heim M.A."/>
            <person name="Jakoby M."/>
            <person name="Werber M."/>
            <person name="Weisshaar B."/>
        </authorList>
    </citation>
    <scope>GENE FAMILY</scope>
    <scope>NOMENCLATURE</scope>
</reference>
<accession>Q9FKQ6</accession>
<feature type="chain" id="PRO_0000358788" description="Transcription factor bHLH99">
    <location>
        <begin position="1"/>
        <end position="296"/>
    </location>
</feature>
<feature type="domain" description="bHLH" evidence="1">
    <location>
        <begin position="99"/>
        <end position="150"/>
    </location>
</feature>
<proteinExistence type="evidence at transcript level"/>
<evidence type="ECO:0000255" key="1">
    <source>
        <dbReference type="PROSITE-ProRule" id="PRU00981"/>
    </source>
</evidence>
<evidence type="ECO:0000269" key="2">
    <source>
    </source>
</evidence>
<evidence type="ECO:0000305" key="3"/>
<organism>
    <name type="scientific">Arabidopsis thaliana</name>
    <name type="common">Mouse-ear cress</name>
    <dbReference type="NCBI Taxonomy" id="3702"/>
    <lineage>
        <taxon>Eukaryota</taxon>
        <taxon>Viridiplantae</taxon>
        <taxon>Streptophyta</taxon>
        <taxon>Embryophyta</taxon>
        <taxon>Tracheophyta</taxon>
        <taxon>Spermatophyta</taxon>
        <taxon>Magnoliopsida</taxon>
        <taxon>eudicotyledons</taxon>
        <taxon>Gunneridae</taxon>
        <taxon>Pentapetalae</taxon>
        <taxon>rosids</taxon>
        <taxon>malvids</taxon>
        <taxon>Brassicales</taxon>
        <taxon>Brassicaceae</taxon>
        <taxon>Camelineae</taxon>
        <taxon>Arabidopsis</taxon>
    </lineage>
</organism>
<keyword id="KW-0238">DNA-binding</keyword>
<keyword id="KW-0539">Nucleus</keyword>
<keyword id="KW-1185">Reference proteome</keyword>
<keyword id="KW-0804">Transcription</keyword>
<keyword id="KW-0805">Transcription regulation</keyword>
<name>BH099_ARATH</name>